<evidence type="ECO:0000305" key="1"/>
<name>GALT_BACSU</name>
<feature type="chain" id="PRO_0000169900" description="Galactose-1-phosphate uridylyltransferase">
    <location>
        <begin position="1"/>
        <end position="513"/>
    </location>
</feature>
<feature type="sequence conflict" description="In Ref. 1; CAA51592." evidence="1" ref="1">
    <original>S</original>
    <variation>T</variation>
    <location>
        <position position="269"/>
    </location>
</feature>
<proteinExistence type="inferred from homology"/>
<accession>P39575</accession>
<dbReference type="EC" id="2.7.7.12"/>
<dbReference type="EMBL" id="X73124">
    <property type="protein sequence ID" value="CAA51592.1"/>
    <property type="molecule type" value="Genomic_DNA"/>
</dbReference>
<dbReference type="EMBL" id="AL009126">
    <property type="protein sequence ID" value="CAB15845.2"/>
    <property type="molecule type" value="Genomic_DNA"/>
</dbReference>
<dbReference type="PIR" id="S39691">
    <property type="entry name" value="S39691"/>
</dbReference>
<dbReference type="RefSeq" id="NP_391698.2">
    <property type="nucleotide sequence ID" value="NC_000964.3"/>
</dbReference>
<dbReference type="RefSeq" id="WP_003227402.1">
    <property type="nucleotide sequence ID" value="NZ_OZ025638.1"/>
</dbReference>
<dbReference type="FunCoup" id="P39575">
    <property type="interactions" value="71"/>
</dbReference>
<dbReference type="STRING" id="224308.BSU38190"/>
<dbReference type="jPOST" id="P39575"/>
<dbReference type="PaxDb" id="224308-BSU38190"/>
<dbReference type="EnsemblBacteria" id="CAB15845">
    <property type="protein sequence ID" value="CAB15845"/>
    <property type="gene ID" value="BSU_38190"/>
</dbReference>
<dbReference type="GeneID" id="937307"/>
<dbReference type="KEGG" id="bsu:BSU38190"/>
<dbReference type="PATRIC" id="fig|224308.179.peg.4134"/>
<dbReference type="eggNOG" id="COG4468">
    <property type="taxonomic scope" value="Bacteria"/>
</dbReference>
<dbReference type="InParanoid" id="P39575"/>
<dbReference type="OrthoDB" id="2293at2"/>
<dbReference type="PhylomeDB" id="P39575"/>
<dbReference type="BioCyc" id="BSUB:BSU38190-MONOMER"/>
<dbReference type="UniPathway" id="UPA00214"/>
<dbReference type="Proteomes" id="UP000001570">
    <property type="component" value="Chromosome"/>
</dbReference>
<dbReference type="GO" id="GO:0005737">
    <property type="term" value="C:cytoplasm"/>
    <property type="evidence" value="ECO:0007669"/>
    <property type="project" value="UniProtKB-SubCell"/>
</dbReference>
<dbReference type="GO" id="GO:0008108">
    <property type="term" value="F:UDP-glucose:hexose-1-phosphate uridylyltransferase activity"/>
    <property type="evidence" value="ECO:0007669"/>
    <property type="project" value="UniProtKB-UniRule"/>
</dbReference>
<dbReference type="GO" id="GO:0006012">
    <property type="term" value="P:galactose metabolic process"/>
    <property type="evidence" value="ECO:0007669"/>
    <property type="project" value="UniProtKB-UniRule"/>
</dbReference>
<dbReference type="HAMAP" id="MF_00571">
    <property type="entry name" value="GalP_UDP_trans"/>
    <property type="match status" value="1"/>
</dbReference>
<dbReference type="InterPro" id="IPR000766">
    <property type="entry name" value="GalP_uridyl_Trfase_II"/>
</dbReference>
<dbReference type="InterPro" id="IPR023425">
    <property type="entry name" value="GalP_uridyl_Trfase_II_CS"/>
</dbReference>
<dbReference type="InterPro" id="IPR005850">
    <property type="entry name" value="GalP_Utransf_C"/>
</dbReference>
<dbReference type="InterPro" id="IPR005849">
    <property type="entry name" value="GalP_Utransf_N"/>
</dbReference>
<dbReference type="NCBIfam" id="TIGR01239">
    <property type="entry name" value="galT_2"/>
    <property type="match status" value="1"/>
</dbReference>
<dbReference type="NCBIfam" id="NF003629">
    <property type="entry name" value="PRK05270.1-2"/>
    <property type="match status" value="1"/>
</dbReference>
<dbReference type="PANTHER" id="PTHR39191:SF1">
    <property type="entry name" value="DUF4922 DOMAIN-CONTAINING PROTEIN"/>
    <property type="match status" value="1"/>
</dbReference>
<dbReference type="PANTHER" id="PTHR39191">
    <property type="entry name" value="GALACTOSE-1-PHOSPHATE URIDYLYLTRANSFERASE"/>
    <property type="match status" value="1"/>
</dbReference>
<dbReference type="Pfam" id="PF02744">
    <property type="entry name" value="GalP_UDP_tr_C"/>
    <property type="match status" value="1"/>
</dbReference>
<dbReference type="Pfam" id="PF01087">
    <property type="entry name" value="GalP_UDP_transf"/>
    <property type="match status" value="1"/>
</dbReference>
<dbReference type="PIRSF" id="PIRSF006005">
    <property type="entry name" value="GalT_BS"/>
    <property type="match status" value="1"/>
</dbReference>
<dbReference type="PROSITE" id="PS01163">
    <property type="entry name" value="GAL_P_UDP_TRANSF_II"/>
    <property type="match status" value="1"/>
</dbReference>
<sequence length="513" mass="58592">MSIIEHLEQLLEYGLERKLISIWDREYTRNRLYEALGITHPEPNSSTSIKQSQSLPDLLAPIYKWAAETGRMEADTDTYRDLLSAKLMGCFVPAPSEVIRKFEETKALYGPKQATKEFYQYSEDVYYIRTDRIAKNVHWTVPTEYGELEMTINLSKPEKDPKAIAAAKEQEQTNYPMCLLCKENVGFEGSVNHPARQNHRIIPVILEDEQWFLQFSPYVYYPEHCIVLKGEHEPMEISKKTFERLLSFLGQYPHYFIGSNADLPIVGGSILSHDHFQGGAHDFPMARAEAEDVYELNDYPGVSLGLVKWPMSVLRLQGDEPGHVAEAADHIFRTWQTYSDEKAGIAAYTGDTPHNTVTPIARRRGDLYELDIVLRNNRTDEEHPLGIFHPHQEVHHIKKENIGLIEVMGLAILPGRLQEEMKETAAALCSADPKTALEQNPLTAKHSEWALRTMEKRTITKENVDLVIKEELGHVFARILEHAGVFKQTAEGKQAFRRFIDQLGAKPVKSLNR</sequence>
<organism>
    <name type="scientific">Bacillus subtilis (strain 168)</name>
    <dbReference type="NCBI Taxonomy" id="224308"/>
    <lineage>
        <taxon>Bacteria</taxon>
        <taxon>Bacillati</taxon>
        <taxon>Bacillota</taxon>
        <taxon>Bacilli</taxon>
        <taxon>Bacillales</taxon>
        <taxon>Bacillaceae</taxon>
        <taxon>Bacillus</taxon>
    </lineage>
</organism>
<reference key="1">
    <citation type="journal article" date="1993" name="Mol. Microbiol.">
        <title>Bacillus subtilis genome project: cloning and sequencing of the 97 kb region from 325 degrees to 333 degrees.</title>
        <authorList>
            <person name="Glaser P."/>
            <person name="Kunst F."/>
            <person name="Arnaud M."/>
            <person name="Coudart M.P."/>
            <person name="Gonzales W."/>
            <person name="Hullo M.-F."/>
            <person name="Ionescu M."/>
            <person name="Lubochinsky B."/>
            <person name="Marcelino L."/>
            <person name="Moszer I."/>
            <person name="Presecan E."/>
            <person name="Santana M."/>
            <person name="Schneider E."/>
            <person name="Schweizer J."/>
            <person name="Vertes A."/>
            <person name="Rapoport G."/>
            <person name="Danchin A."/>
        </authorList>
    </citation>
    <scope>NUCLEOTIDE SEQUENCE [GENOMIC DNA]</scope>
    <source>
        <strain>168</strain>
    </source>
</reference>
<reference key="2">
    <citation type="journal article" date="1997" name="Nature">
        <title>The complete genome sequence of the Gram-positive bacterium Bacillus subtilis.</title>
        <authorList>
            <person name="Kunst F."/>
            <person name="Ogasawara N."/>
            <person name="Moszer I."/>
            <person name="Albertini A.M."/>
            <person name="Alloni G."/>
            <person name="Azevedo V."/>
            <person name="Bertero M.G."/>
            <person name="Bessieres P."/>
            <person name="Bolotin A."/>
            <person name="Borchert S."/>
            <person name="Borriss R."/>
            <person name="Boursier L."/>
            <person name="Brans A."/>
            <person name="Braun M."/>
            <person name="Brignell S.C."/>
            <person name="Bron S."/>
            <person name="Brouillet S."/>
            <person name="Bruschi C.V."/>
            <person name="Caldwell B."/>
            <person name="Capuano V."/>
            <person name="Carter N.M."/>
            <person name="Choi S.-K."/>
            <person name="Codani J.-J."/>
            <person name="Connerton I.F."/>
            <person name="Cummings N.J."/>
            <person name="Daniel R.A."/>
            <person name="Denizot F."/>
            <person name="Devine K.M."/>
            <person name="Duesterhoeft A."/>
            <person name="Ehrlich S.D."/>
            <person name="Emmerson P.T."/>
            <person name="Entian K.-D."/>
            <person name="Errington J."/>
            <person name="Fabret C."/>
            <person name="Ferrari E."/>
            <person name="Foulger D."/>
            <person name="Fritz C."/>
            <person name="Fujita M."/>
            <person name="Fujita Y."/>
            <person name="Fuma S."/>
            <person name="Galizzi A."/>
            <person name="Galleron N."/>
            <person name="Ghim S.-Y."/>
            <person name="Glaser P."/>
            <person name="Goffeau A."/>
            <person name="Golightly E.J."/>
            <person name="Grandi G."/>
            <person name="Guiseppi G."/>
            <person name="Guy B.J."/>
            <person name="Haga K."/>
            <person name="Haiech J."/>
            <person name="Harwood C.R."/>
            <person name="Henaut A."/>
            <person name="Hilbert H."/>
            <person name="Holsappel S."/>
            <person name="Hosono S."/>
            <person name="Hullo M.-F."/>
            <person name="Itaya M."/>
            <person name="Jones L.-M."/>
            <person name="Joris B."/>
            <person name="Karamata D."/>
            <person name="Kasahara Y."/>
            <person name="Klaerr-Blanchard M."/>
            <person name="Klein C."/>
            <person name="Kobayashi Y."/>
            <person name="Koetter P."/>
            <person name="Koningstein G."/>
            <person name="Krogh S."/>
            <person name="Kumano M."/>
            <person name="Kurita K."/>
            <person name="Lapidus A."/>
            <person name="Lardinois S."/>
            <person name="Lauber J."/>
            <person name="Lazarevic V."/>
            <person name="Lee S.-M."/>
            <person name="Levine A."/>
            <person name="Liu H."/>
            <person name="Masuda S."/>
            <person name="Mauel C."/>
            <person name="Medigue C."/>
            <person name="Medina N."/>
            <person name="Mellado R.P."/>
            <person name="Mizuno M."/>
            <person name="Moestl D."/>
            <person name="Nakai S."/>
            <person name="Noback M."/>
            <person name="Noone D."/>
            <person name="O'Reilly M."/>
            <person name="Ogawa K."/>
            <person name="Ogiwara A."/>
            <person name="Oudega B."/>
            <person name="Park S.-H."/>
            <person name="Parro V."/>
            <person name="Pohl T.M."/>
            <person name="Portetelle D."/>
            <person name="Porwollik S."/>
            <person name="Prescott A.M."/>
            <person name="Presecan E."/>
            <person name="Pujic P."/>
            <person name="Purnelle B."/>
            <person name="Rapoport G."/>
            <person name="Rey M."/>
            <person name="Reynolds S."/>
            <person name="Rieger M."/>
            <person name="Rivolta C."/>
            <person name="Rocha E."/>
            <person name="Roche B."/>
            <person name="Rose M."/>
            <person name="Sadaie Y."/>
            <person name="Sato T."/>
            <person name="Scanlan E."/>
            <person name="Schleich S."/>
            <person name="Schroeter R."/>
            <person name="Scoffone F."/>
            <person name="Sekiguchi J."/>
            <person name="Sekowska A."/>
            <person name="Seror S.J."/>
            <person name="Serror P."/>
            <person name="Shin B.-S."/>
            <person name="Soldo B."/>
            <person name="Sorokin A."/>
            <person name="Tacconi E."/>
            <person name="Takagi T."/>
            <person name="Takahashi H."/>
            <person name="Takemaru K."/>
            <person name="Takeuchi M."/>
            <person name="Tamakoshi A."/>
            <person name="Tanaka T."/>
            <person name="Terpstra P."/>
            <person name="Tognoni A."/>
            <person name="Tosato V."/>
            <person name="Uchiyama S."/>
            <person name="Vandenbol M."/>
            <person name="Vannier F."/>
            <person name="Vassarotti A."/>
            <person name="Viari A."/>
            <person name="Wambutt R."/>
            <person name="Wedler E."/>
            <person name="Wedler H."/>
            <person name="Weitzenegger T."/>
            <person name="Winters P."/>
            <person name="Wipat A."/>
            <person name="Yamamoto H."/>
            <person name="Yamane K."/>
            <person name="Yasumoto K."/>
            <person name="Yata K."/>
            <person name="Yoshida K."/>
            <person name="Yoshikawa H.-F."/>
            <person name="Zumstein E."/>
            <person name="Yoshikawa H."/>
            <person name="Danchin A."/>
        </authorList>
    </citation>
    <scope>NUCLEOTIDE SEQUENCE [LARGE SCALE GENOMIC DNA]</scope>
    <source>
        <strain>168</strain>
    </source>
</reference>
<reference key="3">
    <citation type="journal article" date="2009" name="Microbiology">
        <title>From a consortium sequence to a unified sequence: the Bacillus subtilis 168 reference genome a decade later.</title>
        <authorList>
            <person name="Barbe V."/>
            <person name="Cruveiller S."/>
            <person name="Kunst F."/>
            <person name="Lenoble P."/>
            <person name="Meurice G."/>
            <person name="Sekowska A."/>
            <person name="Vallenet D."/>
            <person name="Wang T."/>
            <person name="Moszer I."/>
            <person name="Medigue C."/>
            <person name="Danchin A."/>
        </authorList>
    </citation>
    <scope>SEQUENCE REVISION TO 269</scope>
</reference>
<gene>
    <name type="primary">galT</name>
    <name type="ordered locus">BSU38190</name>
    <name type="ORF">ipa-36d</name>
</gene>
<comment type="catalytic activity">
    <reaction>
        <text>alpha-D-galactose 1-phosphate + UDP-alpha-D-glucose = alpha-D-glucose 1-phosphate + UDP-alpha-D-galactose</text>
        <dbReference type="Rhea" id="RHEA:13989"/>
        <dbReference type="ChEBI" id="CHEBI:58336"/>
        <dbReference type="ChEBI" id="CHEBI:58601"/>
        <dbReference type="ChEBI" id="CHEBI:58885"/>
        <dbReference type="ChEBI" id="CHEBI:66914"/>
        <dbReference type="EC" id="2.7.7.12"/>
    </reaction>
</comment>
<comment type="pathway">
    <text>Carbohydrate metabolism; galactose metabolism.</text>
</comment>
<comment type="subcellular location">
    <subcellularLocation>
        <location evidence="1">Cytoplasm</location>
    </subcellularLocation>
</comment>
<comment type="similarity">
    <text evidence="1">Belongs to the galactose-1-phosphate uridylyltransferase type 2 family.</text>
</comment>
<protein>
    <recommendedName>
        <fullName>Galactose-1-phosphate uridylyltransferase</fullName>
        <shortName>Gal-1-P uridylyltransferase</shortName>
        <ecNumber>2.7.7.12</ecNumber>
    </recommendedName>
    <alternativeName>
        <fullName>UDP-glucose--hexose-1-phosphate uridylyltransferase</fullName>
    </alternativeName>
</protein>
<keyword id="KW-0119">Carbohydrate metabolism</keyword>
<keyword id="KW-0963">Cytoplasm</keyword>
<keyword id="KW-0299">Galactose metabolism</keyword>
<keyword id="KW-0548">Nucleotidyltransferase</keyword>
<keyword id="KW-1185">Reference proteome</keyword>
<keyword id="KW-0808">Transferase</keyword>